<evidence type="ECO:0000255" key="1"/>
<evidence type="ECO:0000256" key="2">
    <source>
        <dbReference type="SAM" id="MobiDB-lite"/>
    </source>
</evidence>
<evidence type="ECO:0000305" key="3"/>
<evidence type="ECO:0007829" key="4">
    <source>
        <dbReference type="PDB" id="2WSC"/>
    </source>
</evidence>
<evidence type="ECO:0007829" key="5">
    <source>
        <dbReference type="PDB" id="4XK8"/>
    </source>
</evidence>
<keyword id="KW-0002">3D-structure</keyword>
<keyword id="KW-0150">Chloroplast</keyword>
<keyword id="KW-0903">Direct protein sequencing</keyword>
<keyword id="KW-0472">Membrane</keyword>
<keyword id="KW-0602">Photosynthesis</keyword>
<keyword id="KW-0603">Photosystem I</keyword>
<keyword id="KW-0934">Plastid</keyword>
<keyword id="KW-1185">Reference proteome</keyword>
<keyword id="KW-0793">Thylakoid</keyword>
<keyword id="KW-0809">Transit peptide</keyword>
<keyword id="KW-0812">Transmembrane</keyword>
<keyword id="KW-1133">Transmembrane helix</keyword>
<sequence>MAAATASLSSTLLAPCSSKQPQPQQQHQHQQLKCKSFSGLRPLKLNISSNNSSSSLSMSSARRSMTCRAELSPSLVISLSTGLSLFLGRFVFFNFQRENMAKQVPEQNGMSHFEAGDTRAKEYVSLLKSNDPVGFNIVDVLAWGSIGHIVAYYILATASNGYDPSFF</sequence>
<protein>
    <recommendedName>
        <fullName>Photosystem I reaction center subunit V, chloroplastic</fullName>
    </recommendedName>
    <alternativeName>
        <fullName>PSI-G</fullName>
    </alternativeName>
    <alternativeName>
        <fullName>Photosystem I 9 kDa protein</fullName>
    </alternativeName>
</protein>
<dbReference type="EMBL" id="X13134">
    <property type="protein sequence ID" value="CAA31524.1"/>
    <property type="molecule type" value="mRNA"/>
</dbReference>
<dbReference type="PIR" id="S00452">
    <property type="entry name" value="F1SP5"/>
</dbReference>
<dbReference type="PDB" id="2O01">
    <property type="method" value="X-ray"/>
    <property type="resolution" value="3.40 A"/>
    <property type="chains" value="G=73-167"/>
</dbReference>
<dbReference type="PDB" id="2WSC">
    <property type="method" value="X-ray"/>
    <property type="resolution" value="3.30 A"/>
    <property type="chains" value="G=1-167"/>
</dbReference>
<dbReference type="PDB" id="2WSE">
    <property type="method" value="X-ray"/>
    <property type="resolution" value="3.49 A"/>
    <property type="chains" value="G=1-167"/>
</dbReference>
<dbReference type="PDB" id="2WSF">
    <property type="method" value="X-ray"/>
    <property type="resolution" value="3.48 A"/>
    <property type="chains" value="G=1-167"/>
</dbReference>
<dbReference type="PDB" id="4XK8">
    <property type="method" value="X-ray"/>
    <property type="resolution" value="2.80 A"/>
    <property type="chains" value="G/g=70-164"/>
</dbReference>
<dbReference type="PDB" id="9GRX">
    <property type="method" value="EM"/>
    <property type="resolution" value="3.19 A"/>
    <property type="chains" value="g=71-167"/>
</dbReference>
<dbReference type="PDBsum" id="2O01"/>
<dbReference type="PDBsum" id="2WSC"/>
<dbReference type="PDBsum" id="2WSE"/>
<dbReference type="PDBsum" id="2WSF"/>
<dbReference type="PDBsum" id="4XK8"/>
<dbReference type="PDBsum" id="9GRX"/>
<dbReference type="EMDB" id="EMD-51527"/>
<dbReference type="SMR" id="P12357"/>
<dbReference type="OrthoDB" id="494978at2759"/>
<dbReference type="EvolutionaryTrace" id="P12357"/>
<dbReference type="Proteomes" id="UP001155700">
    <property type="component" value="Unplaced"/>
</dbReference>
<dbReference type="GO" id="GO:0009535">
    <property type="term" value="C:chloroplast thylakoid membrane"/>
    <property type="evidence" value="ECO:0007669"/>
    <property type="project" value="UniProtKB-SubCell"/>
</dbReference>
<dbReference type="GO" id="GO:0009522">
    <property type="term" value="C:photosystem I"/>
    <property type="evidence" value="ECO:0007669"/>
    <property type="project" value="UniProtKB-KW"/>
</dbReference>
<dbReference type="GO" id="GO:0015979">
    <property type="term" value="P:photosynthesis"/>
    <property type="evidence" value="ECO:0007669"/>
    <property type="project" value="UniProtKB-KW"/>
</dbReference>
<dbReference type="DisProt" id="DP00984"/>
<dbReference type="FunFam" id="1.10.286.40:FF:000002">
    <property type="entry name" value="Photosystem I reaction center subunit V"/>
    <property type="match status" value="1"/>
</dbReference>
<dbReference type="Gene3D" id="1.10.286.40">
    <property type="entry name" value="Chlorophyll a-b binding protein like"/>
    <property type="match status" value="1"/>
</dbReference>
<dbReference type="InterPro" id="IPR017494">
    <property type="entry name" value="PSI_PsaG"/>
</dbReference>
<dbReference type="InterPro" id="IPR000549">
    <property type="entry name" value="PSI_PsaG/PsaK"/>
</dbReference>
<dbReference type="InterPro" id="IPR023618">
    <property type="entry name" value="PSI_PsaG/PsaK_dom"/>
</dbReference>
<dbReference type="InterPro" id="IPR016370">
    <property type="entry name" value="PSI_PsaG/PsaK_pln"/>
</dbReference>
<dbReference type="NCBIfam" id="TIGR03051">
    <property type="entry name" value="PS_I_psaG_plant"/>
    <property type="match status" value="1"/>
</dbReference>
<dbReference type="PANTHER" id="PTHR34195:SF1">
    <property type="entry name" value="PHOTOSYSTEM I REACTION CENTER SUBUNIT V, CHLOROPLASTIC"/>
    <property type="match status" value="1"/>
</dbReference>
<dbReference type="PANTHER" id="PTHR34195">
    <property type="entry name" value="PHOTOSYSTEM I REACTION CENTER SUBUNIT V, CHLOROPLASTIC-RELATED"/>
    <property type="match status" value="1"/>
</dbReference>
<dbReference type="Pfam" id="PF01241">
    <property type="entry name" value="PSI_PSAK"/>
    <property type="match status" value="1"/>
</dbReference>
<dbReference type="PIRSF" id="PIRSF002912">
    <property type="entry name" value="PSI_PsaK"/>
    <property type="match status" value="1"/>
</dbReference>
<dbReference type="PROSITE" id="PS01026">
    <property type="entry name" value="PHOTOSYSTEM_I_PSAGK"/>
    <property type="match status" value="1"/>
</dbReference>
<reference key="1">
    <citation type="journal article" date="1988" name="FEBS Lett.">
        <title>Nucleotide sequence of cDNA clones encoding the entire precursor polypeptides for subunits IV and V of the photosystem I reaction center from spinach.</title>
        <authorList>
            <person name="Steppuhn J."/>
            <person name="Hermans J."/>
            <person name="Nechushtai R."/>
            <person name="Ljungberg U."/>
            <person name="Thuemmler F."/>
            <person name="Lottspeich F."/>
            <person name="Herrmann R.G."/>
        </authorList>
    </citation>
    <scope>NUCLEOTIDE SEQUENCE [MRNA]</scope>
    <scope>PARTIAL PROTEIN SEQUENCE</scope>
</reference>
<feature type="transit peptide" description="Chloroplast">
    <location>
        <begin position="1"/>
        <end position="69"/>
    </location>
</feature>
<feature type="chain" id="PRO_0000029390" description="Photosystem I reaction center subunit V, chloroplastic">
    <location>
        <begin position="70"/>
        <end position="167"/>
    </location>
</feature>
<feature type="transmembrane region" description="Helical" evidence="1">
    <location>
        <begin position="75"/>
        <end position="95"/>
    </location>
</feature>
<feature type="transmembrane region" description="Helical" evidence="1">
    <location>
        <begin position="137"/>
        <end position="157"/>
    </location>
</feature>
<feature type="region of interest" description="Disordered" evidence="2">
    <location>
        <begin position="1"/>
        <end position="32"/>
    </location>
</feature>
<feature type="compositionally biased region" description="Low complexity" evidence="2">
    <location>
        <begin position="1"/>
        <end position="31"/>
    </location>
</feature>
<feature type="helix" evidence="5">
    <location>
        <begin position="73"/>
        <end position="90"/>
    </location>
</feature>
<feature type="helix" evidence="5">
    <location>
        <begin position="93"/>
        <end position="102"/>
    </location>
</feature>
<feature type="strand" evidence="4">
    <location>
        <begin position="105"/>
        <end position="109"/>
    </location>
</feature>
<feature type="turn" evidence="5">
    <location>
        <begin position="112"/>
        <end position="116"/>
    </location>
</feature>
<feature type="helix" evidence="5">
    <location>
        <begin position="118"/>
        <end position="120"/>
    </location>
</feature>
<feature type="helix" evidence="5">
    <location>
        <begin position="124"/>
        <end position="127"/>
    </location>
</feature>
<feature type="strand" evidence="5">
    <location>
        <begin position="131"/>
        <end position="133"/>
    </location>
</feature>
<feature type="helix" evidence="5">
    <location>
        <begin position="137"/>
        <end position="159"/>
    </location>
</feature>
<accession>P12357</accession>
<organism>
    <name type="scientific">Spinacia oleracea</name>
    <name type="common">Spinach</name>
    <dbReference type="NCBI Taxonomy" id="3562"/>
    <lineage>
        <taxon>Eukaryota</taxon>
        <taxon>Viridiplantae</taxon>
        <taxon>Streptophyta</taxon>
        <taxon>Embryophyta</taxon>
        <taxon>Tracheophyta</taxon>
        <taxon>Spermatophyta</taxon>
        <taxon>Magnoliopsida</taxon>
        <taxon>eudicotyledons</taxon>
        <taxon>Gunneridae</taxon>
        <taxon>Pentapetalae</taxon>
        <taxon>Caryophyllales</taxon>
        <taxon>Chenopodiaceae</taxon>
        <taxon>Chenopodioideae</taxon>
        <taxon>Anserineae</taxon>
        <taxon>Spinacia</taxon>
    </lineage>
</organism>
<comment type="function">
    <text>Not yet known.</text>
</comment>
<comment type="subcellular location">
    <subcellularLocation>
        <location evidence="3">Plastid</location>
        <location evidence="3">Chloroplast thylakoid membrane</location>
        <topology evidence="3">Multi-pass membrane protein</topology>
    </subcellularLocation>
</comment>
<comment type="similarity">
    <text evidence="3">Belongs to the PsaG/PsaK family.</text>
</comment>
<gene>
    <name type="primary">PSAG</name>
</gene>
<name>PSAG_SPIOL</name>
<proteinExistence type="evidence at protein level"/>